<protein>
    <recommendedName>
        <fullName evidence="28">Angiotensin-converting enzyme</fullName>
        <shortName evidence="28">ACE</shortName>
        <ecNumber evidence="12">3.4.15.1</ecNumber>
    </recommendedName>
    <alternativeName>
        <fullName>Dipeptidyl carboxypeptidase I</fullName>
    </alternativeName>
    <alternativeName>
        <fullName evidence="1">Kininase II</fullName>
    </alternativeName>
    <cdAntigenName>CD143</cdAntigenName>
    <component>
        <recommendedName>
            <fullName evidence="1">Angiotensin-converting enzyme, soluble form</fullName>
        </recommendedName>
    </component>
</protein>
<dbReference type="EC" id="3.4.15.1" evidence="12"/>
<dbReference type="EMBL" id="J04946">
    <property type="protein sequence ID" value="AAA37147.1"/>
    <property type="molecule type" value="mRNA"/>
</dbReference>
<dbReference type="EMBL" id="J04947">
    <property type="protein sequence ID" value="AAA37148.1"/>
    <property type="molecule type" value="mRNA"/>
</dbReference>
<dbReference type="EMBL" id="M55333">
    <property type="protein sequence ID" value="AAA37149.1"/>
    <property type="molecule type" value="mRNA"/>
</dbReference>
<dbReference type="EMBL" id="M61094">
    <property type="protein sequence ID" value="AAA37150.1"/>
    <property type="molecule type" value="Genomic_DNA"/>
</dbReference>
<dbReference type="EMBL" id="BC040404">
    <property type="protein sequence ID" value="AAH40404.1"/>
    <property type="molecule type" value="mRNA"/>
</dbReference>
<dbReference type="EMBL" id="J03940">
    <property type="protein sequence ID" value="AAA37146.1"/>
    <property type="molecule type" value="mRNA"/>
</dbReference>
<dbReference type="CCDS" id="CCDS25543.1">
    <molecule id="P09470-1"/>
</dbReference>
<dbReference type="CCDS" id="CCDS25544.1">
    <molecule id="P09470-2"/>
</dbReference>
<dbReference type="PIR" id="A34171">
    <property type="entry name" value="A34171"/>
</dbReference>
<dbReference type="PIR" id="A35655">
    <property type="entry name" value="A35655"/>
</dbReference>
<dbReference type="RefSeq" id="NP_033728.1">
    <molecule id="P09470-2"/>
    <property type="nucleotide sequence ID" value="NM_009598.3"/>
</dbReference>
<dbReference type="RefSeq" id="NP_997507.1">
    <molecule id="P09470-1"/>
    <property type="nucleotide sequence ID" value="NM_207624.6"/>
</dbReference>
<dbReference type="SMR" id="P09470"/>
<dbReference type="BioGRID" id="197920">
    <property type="interactions" value="3"/>
</dbReference>
<dbReference type="FunCoup" id="P09470">
    <property type="interactions" value="119"/>
</dbReference>
<dbReference type="STRING" id="10090.ENSMUSP00000001963"/>
<dbReference type="BindingDB" id="P09470"/>
<dbReference type="ChEMBL" id="CHEMBL2994"/>
<dbReference type="DrugCentral" id="P09470"/>
<dbReference type="MEROPS" id="M02.001"/>
<dbReference type="MEROPS" id="M02.004"/>
<dbReference type="GlyConnect" id="2129">
    <property type="glycosylation" value="9 N-Linked glycans (5 sites)"/>
</dbReference>
<dbReference type="GlyCosmos" id="P09470">
    <property type="glycosylation" value="14 sites, 9 glycans"/>
</dbReference>
<dbReference type="GlyGen" id="P09470">
    <property type="glycosylation" value="15 sites, 16 N-linked glycans (8 sites), 1 O-linked glycan (1 site)"/>
</dbReference>
<dbReference type="iPTMnet" id="P09470"/>
<dbReference type="PhosphoSitePlus" id="P09470"/>
<dbReference type="jPOST" id="P09470"/>
<dbReference type="PaxDb" id="10090-ENSMUSP00000001963"/>
<dbReference type="PeptideAtlas" id="P09470"/>
<dbReference type="ProteomicsDB" id="285580">
    <molecule id="P09470-1"/>
</dbReference>
<dbReference type="ProteomicsDB" id="285581">
    <molecule id="P09470-2"/>
</dbReference>
<dbReference type="Antibodypedia" id="31288">
    <property type="antibodies" value="911 antibodies from 43 providers"/>
</dbReference>
<dbReference type="DNASU" id="11421"/>
<dbReference type="Ensembl" id="ENSMUST00000001963.14">
    <molecule id="P09470-1"/>
    <property type="protein sequence ID" value="ENSMUSP00000001963.8"/>
    <property type="gene ID" value="ENSMUSG00000020681.15"/>
</dbReference>
<dbReference type="Ensembl" id="ENSMUST00000001964.8">
    <molecule id="P09470-2"/>
    <property type="protein sequence ID" value="ENSMUSP00000001964.8"/>
    <property type="gene ID" value="ENSMUSG00000020681.15"/>
</dbReference>
<dbReference type="GeneID" id="11421"/>
<dbReference type="KEGG" id="mmu:11421"/>
<dbReference type="UCSC" id="uc007lxu.2">
    <molecule id="P09470-1"/>
    <property type="organism name" value="mouse"/>
</dbReference>
<dbReference type="UCSC" id="uc007lxw.2">
    <molecule id="P09470-2"/>
    <property type="organism name" value="mouse"/>
</dbReference>
<dbReference type="AGR" id="MGI:87874"/>
<dbReference type="CTD" id="1636"/>
<dbReference type="MGI" id="MGI:87874">
    <property type="gene designation" value="Ace"/>
</dbReference>
<dbReference type="VEuPathDB" id="HostDB:ENSMUSG00000020681"/>
<dbReference type="eggNOG" id="KOG3690">
    <property type="taxonomic scope" value="Eukaryota"/>
</dbReference>
<dbReference type="GeneTree" id="ENSGT00940000162051"/>
<dbReference type="HOGENOM" id="CLU_014364_3_0_1"/>
<dbReference type="InParanoid" id="P09470"/>
<dbReference type="OMA" id="GMPPEFW"/>
<dbReference type="OrthoDB" id="10029630at2759"/>
<dbReference type="PhylomeDB" id="P09470"/>
<dbReference type="TreeFam" id="TF312861"/>
<dbReference type="BRENDA" id="3.4.15.1">
    <property type="organism ID" value="3474"/>
</dbReference>
<dbReference type="Reactome" id="R-MMU-2022377">
    <property type="pathway name" value="Metabolism of Angiotensinogen to Angiotensins"/>
</dbReference>
<dbReference type="BioGRID-ORCS" id="11421">
    <property type="hits" value="2 hits in 78 CRISPR screens"/>
</dbReference>
<dbReference type="ChiTaRS" id="Ace">
    <property type="organism name" value="mouse"/>
</dbReference>
<dbReference type="PRO" id="PR:P09470"/>
<dbReference type="Proteomes" id="UP000000589">
    <property type="component" value="Chromosome 11"/>
</dbReference>
<dbReference type="RNAct" id="P09470">
    <property type="molecule type" value="protein"/>
</dbReference>
<dbReference type="Bgee" id="ENSMUSG00000020681">
    <property type="expression patterns" value="Expressed in small intestine Peyer's patch and 193 other cell types or tissues"/>
</dbReference>
<dbReference type="ExpressionAtlas" id="P09470">
    <property type="expression patterns" value="baseline and differential"/>
</dbReference>
<dbReference type="GO" id="GO:0005737">
    <property type="term" value="C:cytoplasm"/>
    <property type="evidence" value="ECO:0000314"/>
    <property type="project" value="UniProtKB"/>
</dbReference>
<dbReference type="GO" id="GO:0005768">
    <property type="term" value="C:endosome"/>
    <property type="evidence" value="ECO:0007669"/>
    <property type="project" value="Ensembl"/>
</dbReference>
<dbReference type="GO" id="GO:0009897">
    <property type="term" value="C:external side of plasma membrane"/>
    <property type="evidence" value="ECO:0007669"/>
    <property type="project" value="Ensembl"/>
</dbReference>
<dbReference type="GO" id="GO:0070062">
    <property type="term" value="C:extracellular exosome"/>
    <property type="evidence" value="ECO:0007669"/>
    <property type="project" value="Ensembl"/>
</dbReference>
<dbReference type="GO" id="GO:0005576">
    <property type="term" value="C:extracellular region"/>
    <property type="evidence" value="ECO:0000314"/>
    <property type="project" value="MGI"/>
</dbReference>
<dbReference type="GO" id="GO:0005615">
    <property type="term" value="C:extracellular space"/>
    <property type="evidence" value="ECO:0000250"/>
    <property type="project" value="UniProtKB"/>
</dbReference>
<dbReference type="GO" id="GO:0005764">
    <property type="term" value="C:lysosome"/>
    <property type="evidence" value="ECO:0007669"/>
    <property type="project" value="Ensembl"/>
</dbReference>
<dbReference type="GO" id="GO:0005886">
    <property type="term" value="C:plasma membrane"/>
    <property type="evidence" value="ECO:0000314"/>
    <property type="project" value="UniProtKB"/>
</dbReference>
<dbReference type="GO" id="GO:0031711">
    <property type="term" value="F:bradykinin receptor binding"/>
    <property type="evidence" value="ECO:0007669"/>
    <property type="project" value="Ensembl"/>
</dbReference>
<dbReference type="GO" id="GO:0005516">
    <property type="term" value="F:calmodulin binding"/>
    <property type="evidence" value="ECO:0007669"/>
    <property type="project" value="UniProtKB-KW"/>
</dbReference>
<dbReference type="GO" id="GO:0031404">
    <property type="term" value="F:chloride ion binding"/>
    <property type="evidence" value="ECO:0000250"/>
    <property type="project" value="UniProtKB"/>
</dbReference>
<dbReference type="GO" id="GO:0004181">
    <property type="term" value="F:metallocarboxypeptidase activity"/>
    <property type="evidence" value="ECO:0000314"/>
    <property type="project" value="MGI"/>
</dbReference>
<dbReference type="GO" id="GO:0070573">
    <property type="term" value="F:metallodipeptidase activity"/>
    <property type="evidence" value="ECO:0000250"/>
    <property type="project" value="UniProtKB"/>
</dbReference>
<dbReference type="GO" id="GO:0004222">
    <property type="term" value="F:metalloendopeptidase activity"/>
    <property type="evidence" value="ECO:0000250"/>
    <property type="project" value="UniProtKB"/>
</dbReference>
<dbReference type="GO" id="GO:0008237">
    <property type="term" value="F:metallopeptidase activity"/>
    <property type="evidence" value="ECO:0000314"/>
    <property type="project" value="UniProtKB"/>
</dbReference>
<dbReference type="GO" id="GO:0051019">
    <property type="term" value="F:mitogen-activated protein kinase binding"/>
    <property type="evidence" value="ECO:0007669"/>
    <property type="project" value="Ensembl"/>
</dbReference>
<dbReference type="GO" id="GO:0031434">
    <property type="term" value="F:mitogen-activated protein kinase kinase binding"/>
    <property type="evidence" value="ECO:0007669"/>
    <property type="project" value="Ensembl"/>
</dbReference>
<dbReference type="GO" id="GO:0008233">
    <property type="term" value="F:peptidase activity"/>
    <property type="evidence" value="ECO:0000315"/>
    <property type="project" value="MGI"/>
</dbReference>
<dbReference type="GO" id="GO:0008241">
    <property type="term" value="F:peptidyl-dipeptidase activity"/>
    <property type="evidence" value="ECO:0000314"/>
    <property type="project" value="UniProtKB"/>
</dbReference>
<dbReference type="GO" id="GO:0008240">
    <property type="term" value="F:tripeptidyl-peptidase activity"/>
    <property type="evidence" value="ECO:0007669"/>
    <property type="project" value="Ensembl"/>
</dbReference>
<dbReference type="GO" id="GO:0008270">
    <property type="term" value="F:zinc ion binding"/>
    <property type="evidence" value="ECO:0007669"/>
    <property type="project" value="Ensembl"/>
</dbReference>
<dbReference type="GO" id="GO:0050435">
    <property type="term" value="P:amyloid-beta metabolic process"/>
    <property type="evidence" value="ECO:0007669"/>
    <property type="project" value="Ensembl"/>
</dbReference>
<dbReference type="GO" id="GO:0002003">
    <property type="term" value="P:angiotensin maturation"/>
    <property type="evidence" value="ECO:0000314"/>
    <property type="project" value="UniProtKB"/>
</dbReference>
<dbReference type="GO" id="GO:0038166">
    <property type="term" value="P:angiotensin-activated signaling pathway"/>
    <property type="evidence" value="ECO:0000315"/>
    <property type="project" value="BHF-UCL"/>
</dbReference>
<dbReference type="GO" id="GO:0050482">
    <property type="term" value="P:arachidonate secretion"/>
    <property type="evidence" value="ECO:0007669"/>
    <property type="project" value="Ensembl"/>
</dbReference>
<dbReference type="GO" id="GO:0010815">
    <property type="term" value="P:bradykinin catabolic process"/>
    <property type="evidence" value="ECO:0000250"/>
    <property type="project" value="UniProtKB"/>
</dbReference>
<dbReference type="GO" id="GO:0071838">
    <property type="term" value="P:cell proliferation in bone marrow"/>
    <property type="evidence" value="ECO:0000315"/>
    <property type="project" value="BHF-UCL"/>
</dbReference>
<dbReference type="GO" id="GO:0060047">
    <property type="term" value="P:heart contraction"/>
    <property type="evidence" value="ECO:0000315"/>
    <property type="project" value="MGI"/>
</dbReference>
<dbReference type="GO" id="GO:0042447">
    <property type="term" value="P:hormone catabolic process"/>
    <property type="evidence" value="ECO:0000314"/>
    <property type="project" value="UniProtKB"/>
</dbReference>
<dbReference type="GO" id="GO:0001822">
    <property type="term" value="P:kidney development"/>
    <property type="evidence" value="ECO:0000315"/>
    <property type="project" value="UniProtKB"/>
</dbReference>
<dbReference type="GO" id="GO:0008584">
    <property type="term" value="P:male gonad development"/>
    <property type="evidence" value="ECO:0000315"/>
    <property type="project" value="UniProtKB"/>
</dbReference>
<dbReference type="GO" id="GO:1903597">
    <property type="term" value="P:negative regulation of gap junction assembly"/>
    <property type="evidence" value="ECO:0000315"/>
    <property type="project" value="BHF-UCL"/>
</dbReference>
<dbReference type="GO" id="GO:0010629">
    <property type="term" value="P:negative regulation of gene expression"/>
    <property type="evidence" value="ECO:0000315"/>
    <property type="project" value="BHF-UCL"/>
</dbReference>
<dbReference type="GO" id="GO:0002446">
    <property type="term" value="P:neutrophil mediated immunity"/>
    <property type="evidence" value="ECO:0000315"/>
    <property type="project" value="MGI"/>
</dbReference>
<dbReference type="GO" id="GO:0003084">
    <property type="term" value="P:positive regulation of systemic arterial blood pressure"/>
    <property type="evidence" value="ECO:0000315"/>
    <property type="project" value="MGI"/>
</dbReference>
<dbReference type="GO" id="GO:0010608">
    <property type="term" value="P:post-transcriptional regulation of gene expression"/>
    <property type="evidence" value="ECO:0000315"/>
    <property type="project" value="BHF-UCL"/>
</dbReference>
<dbReference type="GO" id="GO:0060177">
    <property type="term" value="P:regulation of angiotensin metabolic process"/>
    <property type="evidence" value="ECO:0007669"/>
    <property type="project" value="Ensembl"/>
</dbReference>
<dbReference type="GO" id="GO:0008217">
    <property type="term" value="P:regulation of blood pressure"/>
    <property type="evidence" value="ECO:0000314"/>
    <property type="project" value="BHF-UCL"/>
</dbReference>
<dbReference type="GO" id="GO:0086091">
    <property type="term" value="P:regulation of heart rate by cardiac conduction"/>
    <property type="evidence" value="ECO:0000315"/>
    <property type="project" value="BHF-UCL"/>
</dbReference>
<dbReference type="GO" id="GO:1902033">
    <property type="term" value="P:regulation of hematopoietic stem cell proliferation"/>
    <property type="evidence" value="ECO:0000315"/>
    <property type="project" value="BHF-UCL"/>
</dbReference>
<dbReference type="GO" id="GO:0048167">
    <property type="term" value="P:regulation of synaptic plasticity"/>
    <property type="evidence" value="ECO:0000314"/>
    <property type="project" value="UniProtKB"/>
</dbReference>
<dbReference type="GO" id="GO:0007283">
    <property type="term" value="P:spermatogenesis"/>
    <property type="evidence" value="ECO:0000315"/>
    <property type="project" value="MGI"/>
</dbReference>
<dbReference type="GO" id="GO:0010814">
    <property type="term" value="P:substance P catabolic process"/>
    <property type="evidence" value="ECO:0000250"/>
    <property type="project" value="UniProtKB"/>
</dbReference>
<dbReference type="CDD" id="cd06461">
    <property type="entry name" value="M2_ACE"/>
    <property type="match status" value="2"/>
</dbReference>
<dbReference type="FunFam" id="1.10.1370.30:FF:000004">
    <property type="entry name" value="Angiotensin-converting enzyme"/>
    <property type="match status" value="2"/>
</dbReference>
<dbReference type="Gene3D" id="1.10.1370.30">
    <property type="match status" value="2"/>
</dbReference>
<dbReference type="InterPro" id="IPR001548">
    <property type="entry name" value="Peptidase_M2"/>
</dbReference>
<dbReference type="PANTHER" id="PTHR10514">
    <property type="entry name" value="ANGIOTENSIN-CONVERTING ENZYME"/>
    <property type="match status" value="1"/>
</dbReference>
<dbReference type="PANTHER" id="PTHR10514:SF27">
    <property type="entry name" value="ANGIOTENSIN-CONVERTING ENZYME"/>
    <property type="match status" value="1"/>
</dbReference>
<dbReference type="Pfam" id="PF01401">
    <property type="entry name" value="Peptidase_M2"/>
    <property type="match status" value="2"/>
</dbReference>
<dbReference type="PRINTS" id="PR00791">
    <property type="entry name" value="PEPDIPTASEA"/>
</dbReference>
<dbReference type="SUPFAM" id="SSF55486">
    <property type="entry name" value="Metalloproteases ('zincins'), catalytic domain"/>
    <property type="match status" value="2"/>
</dbReference>
<dbReference type="PROSITE" id="PS52011">
    <property type="entry name" value="PEPTIDASE_M2"/>
    <property type="match status" value="2"/>
</dbReference>
<dbReference type="PROSITE" id="PS00142">
    <property type="entry name" value="ZINC_PROTEASE"/>
    <property type="match status" value="2"/>
</dbReference>
<comment type="function">
    <text evidence="1 6 7 8 9 12 19 20 21 22">Dipeptidyl carboxypeptidase that removes dipeptides from the C-terminus of a variety of circulating hormones, such as angiotensin I, bradykinin or enkephalins, thereby playing a key role in the regulation of blood pressure, electrolyte homeostasis or synaptic plasticity (PubMed:11723129, PubMed:12777443, PubMed:14757757, PubMed:16270063, PubMed:35201898, PubMed:7753170, PubMed:8642790, PubMed:9231832). Composed of two similar catalytic domains, each possessing a functional active site, with different selectivity for substrates (PubMed:11303049). Plays a major role in the angiotensin-renin system that regulates blood pressure and sodium retention by the kidney by converting angiotensin I to angiotensin II, resulting in an increase of the vasoconstrictor activity of angiotensin (PubMed:11303049, PubMed:14757757, PubMed:9231832). Also able to inactivate bradykinin, a potent vasodilator, and therefore enhance the blood pressure response (By similarity). Acts as a regulator of synaptic transmission by mediating cleavage of neuropeptide hormones, such as substance P, neurotensin or enkephalins (By similarity). Catalyzes degradation of different enkephalin neuropeptides (Met-enkephalin, Leu-enkephalin, Met-enkephalin-Arg-Phe and possibly Met-enkephalin-Arg-Gly-Leu) (PubMed:35201898). Acts as a regulator of synaptic plasticity in the nucleus accumbens of the brain by mediating cleavage of Met-enkephalin-Arg-Phe, a strong ligand of Mu-type opioid receptor OPRM1, into Met-enkephalin (PubMed:35201898). Met-enkephalin-Arg-Phe cleavage by ACE decreases activation of OPRM1, leading to long-term synaptic potentiation of glutamate release (PubMed:35201898). Also acts as a regulator of hematopoietic stem cell differentiation by mediating degradation of hemoregulatory peptide N-acetyl-SDKP (AcSDKP) (PubMed:11303049). Acts as a regulator of cannabinoid signaling pathway by mediating degradation of hemopressin, an antagonist peptide of the cannabinoid receptor CNR1 (By similarity). Involved in amyloid-beta metabolism by catalyzing degradation of Amyloid-beta protein 40 and Amyloid-beta protein 42 peptides, thereby preventing plaque formation (By similarity). Catalyzes cleavage of cholecystokinin (maturation of Cholecystokinin-8 and Cholecystokinin-5) and Gonadoliberin-1 (both maturation and degradation) hormones (By similarity). Degradation of hemoregulatory peptide N-acetyl-SDKP (AcSDKP) and amyloid-beta proteins is mediated by the N-terminal catalytic domain, while angiotensin I and cholecystokinin cleavage is mediated by the C-terminal catalytic region (PubMed:11303049).</text>
</comment>
<comment type="function">
    <molecule>Angiotensin-converting enzyme, soluble form</molecule>
    <text evidence="1">Soluble form that is released in blood plasma and other body fluids following proteolytic cleavage in the juxtamembrane stalk region.</text>
</comment>
<comment type="function">
    <molecule>Isoform Testis-specific</molecule>
    <text evidence="5 7 8 10 12 13 23 24">Isoform produced by alternative promoter usage that is specifically expressed in spermatocytes and adult testis, and which is required for male fertility (PubMed:1651914, PubMed:9482924). In contrast to somatic isoforms, only contains one catalytic domain (PubMed:16270063). Acts as a dipeptidyl carboxypeptidase that removes dipeptides from the C-terminus of substrates (PubMed:16270063). The identity of substrates that are needed for male fertility is unknown (PubMed:16270063). Isoform Testis-specific and isoform Somatic have distinct activities and cannot completely compensate for the loss of the other when expressed in somatic tissues or testis (PubMed:10831599, PubMed:11723129, PubMed:12777443, PubMed:16270063, PubMed:9664078). May also have a glycosidase activity which releases GPI-anchored proteins from the membrane by cleaving the mannose linkage in the GPI moiety (PubMed:15665832). The GPIase activity was reported to be essential for the egg-binding ability of the sperm (PubMed:15665832). This activity is however unclear and has been challenged by other groups, suggesting that it may be indirect (PubMed:16270063).</text>
</comment>
<comment type="catalytic activity">
    <reaction evidence="6">
        <text>Release of a C-terminal dipeptide, oligopeptide-|-Xaa-Yaa, when Xaa is not Pro, and Yaa is neither Asp nor Glu. Thus, conversion of angiotensin I to angiotensin II, with increase in vasoconstrictor activity, but no action on angiotensin II.</text>
        <dbReference type="EC" id="3.4.15.1"/>
    </reaction>
</comment>
<comment type="catalytic activity">
    <reaction evidence="6">
        <text>angiotensin I + H2O = L-histidyl-L-leucine + angiotensin II</text>
        <dbReference type="Rhea" id="RHEA:63560"/>
        <dbReference type="ChEBI" id="CHEBI:15377"/>
        <dbReference type="ChEBI" id="CHEBI:58506"/>
        <dbReference type="ChEBI" id="CHEBI:147350"/>
        <dbReference type="ChEBI" id="CHEBI:147392"/>
        <dbReference type="EC" id="3.4.15.1"/>
    </reaction>
    <physiologicalReaction direction="left-to-right" evidence="6">
        <dbReference type="Rhea" id="RHEA:63561"/>
    </physiologicalReaction>
</comment>
<comment type="catalytic activity">
    <reaction evidence="1">
        <text>bradykinin + H2O = L-Phe-L-Arg + bradykinin(1-7)</text>
        <dbReference type="Rhea" id="RHEA:71451"/>
        <dbReference type="ChEBI" id="CHEBI:15377"/>
        <dbReference type="ChEBI" id="CHEBI:132988"/>
        <dbReference type="ChEBI" id="CHEBI:133147"/>
        <dbReference type="ChEBI" id="CHEBI:147352"/>
    </reaction>
    <physiologicalReaction direction="left-to-right" evidence="1">
        <dbReference type="Rhea" id="RHEA:71452"/>
    </physiologicalReaction>
</comment>
<comment type="catalytic activity">
    <reaction evidence="1">
        <text>substance P + H2O = substance P(1-9) + L-Leu-L-Met-NH2</text>
        <dbReference type="Rhea" id="RHEA:71459"/>
        <dbReference type="ChEBI" id="CHEBI:15377"/>
        <dbReference type="ChEBI" id="CHEBI:190692"/>
        <dbReference type="ChEBI" id="CHEBI:190693"/>
        <dbReference type="ChEBI" id="CHEBI:190700"/>
    </reaction>
    <physiologicalReaction direction="left-to-right" evidence="1">
        <dbReference type="Rhea" id="RHEA:71460"/>
    </physiologicalReaction>
</comment>
<comment type="catalytic activity">
    <reaction evidence="1">
        <text>substance P + H2O = substance P(1-8) + Gly-L-Leu-L-Met-NH2</text>
        <dbReference type="Rhea" id="RHEA:71463"/>
        <dbReference type="ChEBI" id="CHEBI:15377"/>
        <dbReference type="ChEBI" id="CHEBI:190692"/>
        <dbReference type="ChEBI" id="CHEBI:190694"/>
        <dbReference type="ChEBI" id="CHEBI:190699"/>
    </reaction>
    <physiologicalReaction direction="left-to-right" evidence="1">
        <dbReference type="Rhea" id="RHEA:71464"/>
    </physiologicalReaction>
</comment>
<comment type="catalytic activity">
    <reaction evidence="1">
        <text>substance P + H2O = L-Phe-L-Phe-Gly-L-Leu-L-Met-NH2 + substance P(1-6)</text>
        <dbReference type="Rhea" id="RHEA:71471"/>
        <dbReference type="ChEBI" id="CHEBI:15377"/>
        <dbReference type="ChEBI" id="CHEBI:190692"/>
        <dbReference type="ChEBI" id="CHEBI:190696"/>
        <dbReference type="ChEBI" id="CHEBI:190697"/>
    </reaction>
    <physiologicalReaction direction="left-to-right" evidence="1">
        <dbReference type="Rhea" id="RHEA:71472"/>
    </physiologicalReaction>
</comment>
<comment type="catalytic activity">
    <reaction evidence="1">
        <text>neurotensin + H2O = neurotensin(1-11) + L-isoleucyl-L-leucine</text>
        <dbReference type="Rhea" id="RHEA:71475"/>
        <dbReference type="ChEBI" id="CHEBI:15377"/>
        <dbReference type="ChEBI" id="CHEBI:147362"/>
        <dbReference type="ChEBI" id="CHEBI:190704"/>
        <dbReference type="ChEBI" id="CHEBI:190706"/>
    </reaction>
    <physiologicalReaction direction="left-to-right" evidence="1">
        <dbReference type="Rhea" id="RHEA:71476"/>
    </physiologicalReaction>
</comment>
<comment type="catalytic activity">
    <reaction evidence="6">
        <text>goralatide + H2O = N-acetyl-L-seryl-L-aspartate + L-lysyl-L-proline</text>
        <dbReference type="Rhea" id="RHEA:71455"/>
        <dbReference type="ChEBI" id="CHEBI:15377"/>
        <dbReference type="ChEBI" id="CHEBI:190701"/>
        <dbReference type="ChEBI" id="CHEBI:190702"/>
        <dbReference type="ChEBI" id="CHEBI:190703"/>
    </reaction>
    <physiologicalReaction direction="left-to-right" evidence="6">
        <dbReference type="Rhea" id="RHEA:71456"/>
    </physiologicalReaction>
</comment>
<comment type="catalytic activity">
    <reaction evidence="1">
        <text>Met-enkephalin + H2O = L-phenylalanyl-L-methionine + L-tyrosylglycylglycine</text>
        <dbReference type="Rhea" id="RHEA:71483"/>
        <dbReference type="ChEBI" id="CHEBI:15377"/>
        <dbReference type="ChEBI" id="CHEBI:189868"/>
        <dbReference type="ChEBI" id="CHEBI:190708"/>
        <dbReference type="ChEBI" id="CHEBI:190709"/>
    </reaction>
    <physiologicalReaction direction="left-to-right" evidence="1">
        <dbReference type="Rhea" id="RHEA:71484"/>
    </physiologicalReaction>
</comment>
<comment type="catalytic activity">
    <reaction evidence="1">
        <text>Leu-enkephalin + H2O = L-tyrosylglycylglycine + L-phenylalanyl-L-leucine</text>
        <dbReference type="Rhea" id="RHEA:71487"/>
        <dbReference type="ChEBI" id="CHEBI:15377"/>
        <dbReference type="ChEBI" id="CHEBI:190689"/>
        <dbReference type="ChEBI" id="CHEBI:190708"/>
        <dbReference type="ChEBI" id="CHEBI:190710"/>
    </reaction>
    <physiologicalReaction direction="left-to-right" evidence="1">
        <dbReference type="Rhea" id="RHEA:71488"/>
    </physiologicalReaction>
</comment>
<comment type="catalytic activity">
    <reaction evidence="19">
        <text>Met-enkephalin-Arg-Phe + H2O = L-arginyl-L-phenylalanine + Met-enkephalin</text>
        <dbReference type="Rhea" id="RHEA:70675"/>
        <dbReference type="ChEBI" id="CHEBI:15377"/>
        <dbReference type="ChEBI" id="CHEBI:189868"/>
        <dbReference type="ChEBI" id="CHEBI:189869"/>
        <dbReference type="ChEBI" id="CHEBI:189870"/>
    </reaction>
    <physiologicalReaction direction="left-to-right" evidence="19">
        <dbReference type="Rhea" id="RHEA:70676"/>
    </physiologicalReaction>
</comment>
<comment type="catalytic activity">
    <molecule>Isoform Testis-specific</molecule>
    <reaction evidence="12">
        <text>Release of a C-terminal dipeptide, oligopeptide-|-Xaa-Yaa, when Xaa is not Pro, and Yaa is neither Asp nor Glu. Thus, conversion of angiotensin I to angiotensin II, with increase in vasoconstrictor activity, but no action on angiotensin II.</text>
        <dbReference type="EC" id="3.4.15.1"/>
    </reaction>
</comment>
<comment type="cofactor">
    <cofactor evidence="1">
        <name>Zn(2+)</name>
        <dbReference type="ChEBI" id="CHEBI:29105"/>
    </cofactor>
    <text evidence="1">Binds 2 Zn(2+) ions per subunit.</text>
</comment>
<comment type="cofactor">
    <molecule>Isoform Testis-specific</molecule>
    <cofactor evidence="1">
        <name>Zn(2+)</name>
        <dbReference type="ChEBI" id="CHEBI:29105"/>
    </cofactor>
    <text evidence="1">Isoform Testis-specific only binds 1 Zn(2+) ion per subunit.</text>
</comment>
<comment type="cofactor">
    <cofactor evidence="1">
        <name>chloride</name>
        <dbReference type="ChEBI" id="CHEBI:17996"/>
    </cofactor>
    <text evidence="1">Binds 3 chloride ions per subunit.</text>
</comment>
<comment type="cofactor">
    <molecule>Isoform Testis-specific</molecule>
    <cofactor evidence="1">
        <name>chloride</name>
        <dbReference type="ChEBI" id="CHEBI:17996"/>
    </cofactor>
</comment>
<comment type="activity regulation">
    <text evidence="6 10 19">The dipeptidyl carboxypeptidase activity is specifically inhibited by lisinopril, captopril and enalaprilat (PubMed:15665832, PubMed:35201898). The N-terminal catalytic domain, but not the C-terminal catalytic domain, is specifically inhibited by the phosphinic peptide RXP 407 (PubMed:11303049).</text>
</comment>
<comment type="activity regulation">
    <molecule>Isoform Testis-specific</molecule>
    <text evidence="10">The putative GPIase activity is nearly insensitive to captopril.</text>
</comment>
<comment type="subunit">
    <text evidence="1 2">Monomer and homodimer; homodimerizes following binding to an inhibitor (By similarity). Interacts with calmodulin (CALM1, CALM2 or CALM3); interaction takes place in the cytoplasmic region and regulates phosphorylation and proteolytic cleavage (By similarity).</text>
</comment>
<comment type="subcellular location">
    <molecule>Isoform Somatic</molecule>
    <subcellularLocation>
        <location evidence="17">Cell membrane</location>
        <topology evidence="3">Single-pass type I membrane protein</topology>
    </subcellularLocation>
    <subcellularLocation>
        <location evidence="17">Cytoplasm</location>
    </subcellularLocation>
    <text evidence="17">Detected in both cell membrane and cytoplasm in neurons.</text>
</comment>
<comment type="subcellular location">
    <molecule>Angiotensin-converting enzyme, soluble form</molecule>
    <subcellularLocation>
        <location evidence="1">Secreted</location>
    </subcellularLocation>
</comment>
<comment type="subcellular location">
    <molecule>Isoform Testis-specific</molecule>
    <subcellularLocation>
        <location evidence="1">Cell membrane</location>
        <topology evidence="3">Single-pass type I membrane protein</topology>
    </subcellularLocation>
    <subcellularLocation>
        <location evidence="1">Secreted</location>
    </subcellularLocation>
    <text evidence="1">The testis-specific isoform can be cleaved before the transmembrane region, releasing a soluble form.</text>
</comment>
<comment type="alternative products">
    <event type="alternative promoter"/>
    <isoform>
        <id>P09470-1</id>
        <name>Somatic</name>
        <name evidence="26">sACE</name>
        <sequence type="displayed"/>
    </isoform>
    <isoform>
        <id>P09470-2</id>
        <id>P22967-1</id>
        <name>Testis-specific</name>
        <name>ACE-T</name>
        <name evidence="26">tACE</name>
        <name evidence="25">germinal ACE</name>
        <name evidence="25">gACE</name>
        <sequence type="described" ref="VSP_037638 VSP_037639"/>
    </isoform>
</comment>
<comment type="tissue specificity">
    <molecule>Isoform Somatic</molecule>
    <text evidence="11 19">Highly expressed in kidney and lung; not expressed in the liver (PubMed:16154999). In the brain, expressed in the cerebral cortex, hippocampus, cerebellum and basal ganglia/brainstem (PubMed:16154999). Highly expressed in dopamine receptor DRD1-expressing neurons in the dorsal striatum and the nucleus accumbens of the brain (PubMed:35201898).</text>
</comment>
<comment type="tissue specificity">
    <molecule>Isoform Testis-specific</molecule>
    <text evidence="13">Specifically expressed in spermatocytes, adult testis.</text>
</comment>
<comment type="PTM">
    <molecule>Angiotensin-converting enzyme, soluble form</molecule>
    <text evidence="1">Produced following proteolytic cleavage by secretase enzymes that cleave the transmembrane form in the juxtamembrane stalk region upstream of the transmembrane region. Cleavage can take place at different sites of the juxtamembrane stalk region.</text>
</comment>
<comment type="PTM">
    <text evidence="1 2">Phosphorylated by CK2 on Ser-1305; which allows membrane retention (By similarity). Phosphorylated on tyrosine residues on its extracellular part, promoting cleavage by secretase enzymes and formation of the soluble form (Angiotensin-converting enzyme, soluble form) (By similarity).</text>
</comment>
<comment type="disruption phenotype">
    <text evidence="5 7 8 12 16 20 21 22 23 24">Mice display low blood pressure (hypotension), elevated serum potassium, anemia, urine concentration defects and gross renal structural defects (PubMed:11723129, PubMed:12777443, PubMed:8642790, PubMed:9231832). Male mice also have reduced fertility: sperm show defects in transport within the oviducts and in binding to zonae pellucidae (PubMed:7753170, PubMed:9482924). Mice also show impaired metabolism, characterized by increased energy expenditure, reduced fat mass and improved glucose clearance (PubMed:18443281). Expression of isoform Somatic in testis in knockout mice does not restore male fertility (PubMed:10831599). In contrast, expression of isoform Testis-specific in the sperm of knockout mice only restores fertility without curing other defects (PubMed:9664078). Isoform Testis-specific can substitute for isoform Somatic for normal kidney structure but not for normal blood pressure when expressed in vascular cells of knockout mice (PubMed:11723129, PubMed:12777443, PubMed:16270063).</text>
</comment>
<comment type="disruption phenotype">
    <molecule>Isoform Somatic</molecule>
    <text evidence="23">Mice lacking somatic isoform display normal male fertility.</text>
</comment>
<comment type="similarity">
    <text evidence="29">Belongs to the peptidase M2 family.</text>
</comment>
<organism>
    <name type="scientific">Mus musculus</name>
    <name type="common">Mouse</name>
    <dbReference type="NCBI Taxonomy" id="10090"/>
    <lineage>
        <taxon>Eukaryota</taxon>
        <taxon>Metazoa</taxon>
        <taxon>Chordata</taxon>
        <taxon>Craniata</taxon>
        <taxon>Vertebrata</taxon>
        <taxon>Euteleostomi</taxon>
        <taxon>Mammalia</taxon>
        <taxon>Eutheria</taxon>
        <taxon>Euarchontoglires</taxon>
        <taxon>Glires</taxon>
        <taxon>Rodentia</taxon>
        <taxon>Myomorpha</taxon>
        <taxon>Muroidea</taxon>
        <taxon>Muridae</taxon>
        <taxon>Murinae</taxon>
        <taxon>Mus</taxon>
        <taxon>Mus</taxon>
    </lineage>
</organism>
<feature type="signal peptide" evidence="18">
    <location>
        <begin position="1"/>
        <end position="34"/>
    </location>
</feature>
<feature type="chain" id="PRO_0000028539" description="Angiotensin-converting enzyme">
    <location>
        <begin position="35"/>
        <end position="1312"/>
    </location>
</feature>
<feature type="chain" id="PRO_0000028540" description="Angiotensin-converting enzyme, soluble form" evidence="1">
    <location>
        <begin position="35"/>
        <end position="1237"/>
    </location>
</feature>
<feature type="topological domain" description="Extracellular" evidence="3">
    <location>
        <begin position="35"/>
        <end position="1264"/>
    </location>
</feature>
<feature type="transmembrane region" description="Helical" evidence="3">
    <location>
        <begin position="1265"/>
        <end position="1281"/>
    </location>
</feature>
<feature type="topological domain" description="Cytoplasmic" evidence="3">
    <location>
        <begin position="1282"/>
        <end position="1312"/>
    </location>
</feature>
<feature type="domain" description="Peptidase M2 1" evidence="4">
    <location>
        <begin position="45"/>
        <end position="629"/>
    </location>
</feature>
<feature type="domain" description="Peptidase M2 2" evidence="4">
    <location>
        <begin position="648"/>
        <end position="1227"/>
    </location>
</feature>
<feature type="region of interest" description="Juxtamembrane stalk" evidence="1">
    <location>
        <begin position="1220"/>
        <end position="1261"/>
    </location>
</feature>
<feature type="active site" description="Proton acceptor 1" evidence="4">
    <location>
        <position position="396"/>
    </location>
</feature>
<feature type="active site" description="Proton donor 1" evidence="4">
    <location>
        <position position="525"/>
    </location>
</feature>
<feature type="active site" description="Proton acceptor 2" evidence="4 30">
    <location>
        <position position="994"/>
    </location>
</feature>
<feature type="active site" description="Proton donor 2" evidence="4">
    <location>
        <position position="1123"/>
    </location>
</feature>
<feature type="binding site" evidence="4">
    <location>
        <position position="236"/>
    </location>
    <ligand>
        <name>chloride</name>
        <dbReference type="ChEBI" id="CHEBI:17996"/>
        <label>1</label>
    </ligand>
</feature>
<feature type="binding site" evidence="4">
    <location>
        <position position="395"/>
    </location>
    <ligand>
        <name>Zn(2+)</name>
        <dbReference type="ChEBI" id="CHEBI:29105"/>
        <label>1</label>
        <note>catalytic</note>
    </ligand>
</feature>
<feature type="binding site" evidence="4">
    <location>
        <position position="399"/>
    </location>
    <ligand>
        <name>Zn(2+)</name>
        <dbReference type="ChEBI" id="CHEBI:29105"/>
        <label>1</label>
        <note>catalytic</note>
    </ligand>
</feature>
<feature type="binding site" evidence="4">
    <location>
        <position position="423"/>
    </location>
    <ligand>
        <name>Zn(2+)</name>
        <dbReference type="ChEBI" id="CHEBI:29105"/>
        <label>1</label>
        <note>catalytic</note>
    </ligand>
</feature>
<feature type="binding site" evidence="4">
    <location>
        <position position="534"/>
    </location>
    <ligand>
        <name>chloride</name>
        <dbReference type="ChEBI" id="CHEBI:17996"/>
        <label>1</label>
    </ligand>
</feature>
<feature type="binding site" evidence="4">
    <location>
        <position position="796"/>
    </location>
    <ligand>
        <name>chloride</name>
        <dbReference type="ChEBI" id="CHEBI:17996"/>
        <label>2</label>
    </ligand>
</feature>
<feature type="binding site" evidence="4">
    <location>
        <position position="834"/>
    </location>
    <ligand>
        <name>chloride</name>
        <dbReference type="ChEBI" id="CHEBI:17996"/>
        <label>3</label>
    </ligand>
</feature>
<feature type="binding site" evidence="4 30">
    <location>
        <position position="993"/>
    </location>
    <ligand>
        <name>Zn(2+)</name>
        <dbReference type="ChEBI" id="CHEBI:29105"/>
        <label>2</label>
        <note>catalytic</note>
    </ligand>
</feature>
<feature type="binding site" evidence="4 30">
    <location>
        <position position="997"/>
    </location>
    <ligand>
        <name>Zn(2+)</name>
        <dbReference type="ChEBI" id="CHEBI:29105"/>
        <label>2</label>
        <note>catalytic</note>
    </ligand>
</feature>
<feature type="binding site" evidence="4">
    <location>
        <position position="1021"/>
    </location>
    <ligand>
        <name>Zn(2+)</name>
        <dbReference type="ChEBI" id="CHEBI:29105"/>
        <label>2</label>
        <note>catalytic</note>
    </ligand>
</feature>
<feature type="binding site" evidence="4">
    <location>
        <position position="1095"/>
    </location>
    <ligand>
        <name>chloride</name>
        <dbReference type="ChEBI" id="CHEBI:17996"/>
        <label>2</label>
    </ligand>
</feature>
<feature type="binding site" evidence="4">
    <location>
        <position position="1099"/>
    </location>
    <ligand>
        <name>chloride</name>
        <dbReference type="ChEBI" id="CHEBI:17996"/>
        <label>2</label>
    </ligand>
</feature>
<feature type="binding site" evidence="4">
    <location>
        <position position="1132"/>
    </location>
    <ligand>
        <name>chloride</name>
        <dbReference type="ChEBI" id="CHEBI:17996"/>
        <label>3</label>
    </ligand>
</feature>
<feature type="modified residue" description="Phosphoserine" evidence="32">
    <location>
        <position position="1305"/>
    </location>
</feature>
<feature type="glycosylation site" description="N-linked (GlcNAc...) asparagine" evidence="3">
    <location>
        <position position="59"/>
    </location>
</feature>
<feature type="glycosylation site" description="N-linked (GlcNAc...) asparagine" evidence="3">
    <location>
        <position position="79"/>
    </location>
</feature>
<feature type="glycosylation site" description="N-linked (GlcNAc...) asparagine" evidence="3">
    <location>
        <position position="116"/>
    </location>
</feature>
<feature type="glycosylation site" description="N-linked (GlcNAc...) asparagine" evidence="14">
    <location>
        <position position="151"/>
    </location>
</feature>
<feature type="glycosylation site" description="N-linked (GlcNAc...) asparagine" evidence="3">
    <location>
        <position position="165"/>
    </location>
</feature>
<feature type="glycosylation site" description="N-linked (GlcNAc...) asparagine" evidence="3">
    <location>
        <position position="323"/>
    </location>
</feature>
<feature type="glycosylation site" description="N-linked (GlcNAc...) asparagine" evidence="3">
    <location>
        <position position="514"/>
    </location>
</feature>
<feature type="glycosylation site" description="N-linked (GlcNAc...) asparagine" evidence="3">
    <location>
        <position position="682"/>
    </location>
</feature>
<feature type="glycosylation site" description="N-linked (GlcNAc...) (complex) asparagine" evidence="1">
    <location>
        <position position="700"/>
    </location>
</feature>
<feature type="glycosylation site" description="N-linked (GlcNAc...) (complex) asparagine" evidence="1">
    <location>
        <position position="719"/>
    </location>
</feature>
<feature type="glycosylation site" description="N-linked (GlcNAc...) asparagine" evidence="3">
    <location>
        <position position="765"/>
    </location>
</feature>
<feature type="glycosylation site" description="N-linked (GlcNAc...) asparagine" evidence="3">
    <location>
        <position position="947"/>
    </location>
</feature>
<feature type="glycosylation site" description="N-linked (GlcNAc...) asparagine" evidence="3">
    <location>
        <position position="1196"/>
    </location>
</feature>
<feature type="disulfide bond" evidence="4">
    <location>
        <begin position="162"/>
        <end position="170"/>
    </location>
</feature>
<feature type="disulfide bond" evidence="4">
    <location>
        <begin position="364"/>
        <end position="382"/>
    </location>
</feature>
<feature type="disulfide bond" evidence="4">
    <location>
        <begin position="550"/>
        <end position="562"/>
    </location>
</feature>
<feature type="disulfide bond" evidence="4">
    <location>
        <begin position="762"/>
        <end position="768"/>
    </location>
</feature>
<feature type="disulfide bond" evidence="4">
    <location>
        <begin position="962"/>
        <end position="980"/>
    </location>
</feature>
<feature type="disulfide bond" evidence="4">
    <location>
        <begin position="1148"/>
        <end position="1160"/>
    </location>
</feature>
<feature type="splice variant" id="VSP_037638" description="In isoform Testis-specific." evidence="27">
    <location>
        <begin position="1"/>
        <end position="580"/>
    </location>
</feature>
<feature type="splice variant" id="VSP_037639" description="In isoform Testis-specific." evidence="27">
    <original>GCSRPWQEVLKDLVGSDALDAKALLEYFQPVSQWLEEQNQRNGEVLGWPENQWRPPLPDNYPEGID</original>
    <variation>MGQGWATPGLPSFLFLLLCCGHHLLVLSQVATDHVTANQGITNQATTRSQTTTHQATIDQTTQIPN</variation>
    <location>
        <begin position="581"/>
        <end position="646"/>
    </location>
</feature>
<feature type="mutagenesis site" description="In ACE(7/7) mutant; knockin mice have normal blood pressure, renal function, and hematocrit. Knockin mice show normal plasma levels of angiotensin II but an elevation of plasma and urine peptide N-acetyl-SDKP (AcSDKP)." evidence="9">
    <original>HEMGH</original>
    <variation>KEMGK</variation>
    <location>
        <begin position="395"/>
        <end position="399"/>
    </location>
</feature>
<feature type="mutagenesis site" description="Abolishes peptidase activity but no effect on GPIase activity; when associated with K-997." evidence="10">
    <original>H</original>
    <variation>K</variation>
    <location>
        <position position="993"/>
    </location>
</feature>
<feature type="mutagenesis site" description="Abolishes peptidase activity but no effect on GPIase activity." evidence="10">
    <original>E</original>
    <variation>D</variation>
    <location>
        <position position="994"/>
    </location>
</feature>
<feature type="mutagenesis site" description="Abolishes peptidase activity but no effect on GPIase activity; when associated with K-993." evidence="10">
    <original>H</original>
    <variation>K</variation>
    <location>
        <position position="997"/>
    </location>
</feature>
<feature type="sequence conflict" description="In Ref. 1; AAA37147." evidence="29" ref="1">
    <original>A</original>
    <variation>T</variation>
    <location>
        <position position="568"/>
    </location>
</feature>
<feature type="mutagenesis site" description="Abolished dipeptidyl carboxypeptidase activity. Knockin mice expressed in a knockout background display defects in male fertility. They however show normal blood pressure and kidney morphology." evidence="12 15">
    <original>HEMGH</original>
    <variation>KEMGK</variation>
    <location sequence="P09470-2">
        <begin position="413"/>
        <end position="417"/>
    </location>
</feature>
<gene>
    <name evidence="28 31" type="primary">Ace</name>
    <name type="synonym">Dcp1</name>
</gene>
<sequence length="1312" mass="150918">MGAASGQRGRWPLSPPLLMLSLLVLLLQPSPAPALDPGLQPGNFSPDEAGAQLFAESYNSSAEVVMFQSTVASWAHDTNITEENARRQEEAALVSQEFAEVWGKKAKELYESIWQNFTDSKLRRIIGSIRTLGPANLPLAQRQQYNSLLSNMSRIYSTGKVCFPNKTATCWSLDPELTNILASSRSYAKLLFAWEGWHDAVGIPLKPLYQDFTAISNEAYRQDDFSDTGAFWRSWYESPSFEESLEHIYHQLEPLYLNLHAYVRRALHRRYGDKYVNLRGPIPAHLLGDMWAQSWENIYDMVVPFPDKPNLDVTSTMVQKGWNATHMFRVSEEFFTSLGLSPMPPEFWAESMLEKPTDGREVVCHASAWDFYNRKDFRIKQCTRVTMEQLATVHHEMGHVQYYLQYKDLHVSLRRGANPGFHEAIGDVLALSVSTPAHLHKIGLLDHVTNDIESDINYLLKMALEKIAFLPFGYLVDQWRWGVFSGRTPPSRYNFDWWYLRTKYQGICPPVARNETHFDAGAKFHIPNVTPYIRYFVSFVLQFQFHQALCKEAGHQGPLHQCDIYQSAQAGAKLKQVLQAGCSRPWQEVLKDLVGSDALDAKALLEYFQPVSQWLEEQNQRNGEVLGWPENQWRPPLPDNYPEGIDLETDEAKADRFVEEYDRTAQVLLNEYAEANWQYNTNITIEGSKILLEKSTEVSNHTLKYGTRAKTFDVSNFQNSSIKRIIKKLQNLDRAVLPPKELEEYNQILLDMETTYSLSNICYTNGTCMPLEPDLTNMMATSRKYEELLWAWKSWRDKVGRAILPFFPKYVEFSNKIAKLNGYTDAGDSWRSLYESDNLEQDLEKLYQELQPLYLNLHAYVRRSLHRHYGSEYINLDGPIPAHLLGNMWAQTWSNIYDLVAPFPSAPNIDATEAMIKQGWTPRRIFKEADNFFTSLGLLPVPPEFWNKSMLEKPTDGREVVCHPSAWDFYNGKDFRIKQCTSVNMEDLVIAHHEMGHIQYFMQYKDLPVTFREGANPGFHEAIGDIMALSVSTPKHLYSLNLLSTEGSGYEYDINFLMKMALDKIAFIPFSYLIDQWRWRVFDGSITKENYNQEWWSLRLKYQGLCPPVPRSQGDFDPGSKFHVPANVPYVRYFVSFIIQFQFHEALCRAAGHTGPLHKCDIYQSKEAGKLLADAMKLGYSKPWPEAMKLITGQPNMSASAMMNYFKPLTEWLVTENRRHGETLGWPEYNWAPNTARAEGSTAESNRVNFLGLYLEPQQARVGQWVLLFLGVALLVATVGLAHRLYNIRNHHSLRRPHRGPQFGSEVELRHS</sequence>
<proteinExistence type="evidence at protein level"/>
<name>ACE_MOUSE</name>
<keyword id="KW-0877">Alternative promoter usage</keyword>
<keyword id="KW-0112">Calmodulin-binding</keyword>
<keyword id="KW-0121">Carboxypeptidase</keyword>
<keyword id="KW-1003">Cell membrane</keyword>
<keyword id="KW-0963">Cytoplasm</keyword>
<keyword id="KW-0903">Direct protein sequencing</keyword>
<keyword id="KW-1015">Disulfide bond</keyword>
<keyword id="KW-0325">Glycoprotein</keyword>
<keyword id="KW-0378">Hydrolase</keyword>
<keyword id="KW-0472">Membrane</keyword>
<keyword id="KW-0479">Metal-binding</keyword>
<keyword id="KW-0482">Metalloprotease</keyword>
<keyword id="KW-0597">Phosphoprotein</keyword>
<keyword id="KW-0645">Protease</keyword>
<keyword id="KW-1185">Reference proteome</keyword>
<keyword id="KW-0677">Repeat</keyword>
<keyword id="KW-0964">Secreted</keyword>
<keyword id="KW-0732">Signal</keyword>
<keyword id="KW-0812">Transmembrane</keyword>
<keyword id="KW-1133">Transmembrane helix</keyword>
<keyword id="KW-0862">Zinc</keyword>
<reference key="1">
    <citation type="journal article" date="1989" name="J. Biol. Chem.">
        <title>Mouse angiotensin-converting enzyme is a protein composed of two homologous domains.</title>
        <authorList>
            <person name="Bernstein K.E."/>
            <person name="Martin B.M."/>
            <person name="Edwards A.S."/>
            <person name="Bernstein E.A."/>
        </authorList>
    </citation>
    <scope>NUCLEOTIDE SEQUENCE [MRNA] (ISOFORM SOMATIC)</scope>
</reference>
<reference key="2">
    <citation type="journal article" date="1990" name="Mol. Cell. Biol.">
        <title>Transcription of testicular angiotensin-converting enzyme (ACE) is initiated within the 12th intron of the somatic ACE gene.</title>
        <authorList>
            <person name="Howard T.E."/>
            <person name="Shai S.-Y."/>
            <person name="Langford K.G."/>
            <person name="Martin B.M."/>
            <person name="Bernstein K.E."/>
        </authorList>
    </citation>
    <scope>NUCLEOTIDE SEQUENCE [MRNA] (ISOFORM TESTIS-SPECIFIC)</scope>
    <scope>PARTIAL NUCLEOTIDE SEQUENCE [GENOMIC DNA]</scope>
</reference>
<reference key="3">
    <citation type="journal article" date="2004" name="Genome Res.">
        <title>The status, quality, and expansion of the NIH full-length cDNA project: the Mammalian Gene Collection (MGC).</title>
        <authorList>
            <consortium name="The MGC Project Team"/>
        </authorList>
    </citation>
    <scope>NUCLEOTIDE SEQUENCE [LARGE SCALE MRNA] (ISOFORM SOMATIC)</scope>
    <source>
        <strain>FVB/N</strain>
        <tissue>Mammary gland</tissue>
    </source>
</reference>
<reference key="4">
    <citation type="journal article" date="1988" name="J. Biol. Chem.">
        <title>The isolation of angiotensin-converting enzyme cDNA.</title>
        <authorList>
            <person name="Bernstein K.E."/>
            <person name="Martin B.M."/>
            <person name="Bernstein E.A."/>
            <person name="Linton J."/>
            <person name="Striker L."/>
            <person name="Striker G."/>
        </authorList>
    </citation>
    <scope>NUCLEOTIDE SEQUENCE [MRNA] OF 1-332 (ISOFORM SOMATIC)</scope>
    <scope>PARTIAL PROTEIN SEQUENCE</scope>
</reference>
<reference key="5">
    <citation type="journal article" date="1988" name="Kidney Int.">
        <title>Partial protein sequence of mouse and bovine kidney angiotensin converting enzyme.</title>
        <authorList>
            <person name="Bernstein K.E."/>
            <person name="Martin B.M."/>
            <person name="Striker L."/>
            <person name="Striker G."/>
        </authorList>
    </citation>
    <scope>PROTEIN SEQUENCE OF 35-54</scope>
    <source>
        <tissue>Kidney</tissue>
    </source>
</reference>
<reference key="6">
    <citation type="journal article" date="1991" name="J. Biol. Chem.">
        <title>Transgenic mice demonstrate a testis-specific promoter for angiotensin-converting enzyme.</title>
        <authorList>
            <person name="Langford K.G."/>
            <person name="Shai S.Y."/>
            <person name="Howard T.E."/>
            <person name="Kovac M.J."/>
            <person name="Overbeek P.A."/>
            <person name="Bernstein K.E."/>
        </authorList>
    </citation>
    <scope>ALTERNATIVE PROMOTER USAGE</scope>
    <scope>FUNCTION (ISOFORM TESTIS-SPECIFIC)</scope>
    <scope>TISSUE SPECIFICITY (ISOFORM TESTIS-SPECIFIC)</scope>
</reference>
<reference key="7">
    <citation type="journal article" date="1995" name="Nature">
        <title>Male-female differences in fertility and blood pressure in ACE-deficient mice.</title>
        <authorList>
            <person name="Krege J.H."/>
            <person name="John S.W."/>
            <person name="Langenbach L.L."/>
            <person name="Hodgin J.B."/>
            <person name="Hagaman J.R."/>
            <person name="Bachman E.S."/>
            <person name="Jennette J.C."/>
            <person name="O'Brien D.A."/>
            <person name="Smithies O."/>
        </authorList>
    </citation>
    <scope>FUNCTION</scope>
    <scope>DISRUPTION PHENOTYPE</scope>
</reference>
<reference key="8">
    <citation type="journal article" date="1996" name="Lab. Invest.">
        <title>Mice lacking angiotensin-converting enzyme have low blood pressure, renal pathology, and reduced male fertility.</title>
        <authorList>
            <person name="Esther C.R. Jr."/>
            <person name="Howard T.E."/>
            <person name="Marino E.M."/>
            <person name="Goddard J.M."/>
            <person name="Capecchi M.R."/>
            <person name="Bernstein K.E."/>
        </authorList>
    </citation>
    <scope>FUNCTION</scope>
    <scope>DISRUPTION PHENOTYPE</scope>
</reference>
<reference key="9">
    <citation type="journal article" date="1997" name="Hypertension">
        <title>Blood pressures and cardiovascular homeostasis in mice having reduced or absent angiotensin-converting enzyme gene function.</title>
        <authorList>
            <person name="Tian B."/>
            <person name="Meng Q.C."/>
            <person name="Chen Y.F."/>
            <person name="Krege J.H."/>
            <person name="Smithies O."/>
            <person name="Oparil S."/>
        </authorList>
    </citation>
    <scope>FUNCTION</scope>
    <scope>DISRUPTION PHENOTYPE</scope>
</reference>
<reference key="10">
    <citation type="journal article" date="1998" name="J. Clin. Invest.">
        <title>Selective restoration of male fertility in mice lacking angiotensin-converting enzymes by sperm-specific expression of the testicular isozyme.</title>
        <authorList>
            <person name="Ramaraj P."/>
            <person name="Kessler S.P."/>
            <person name="Colmenares C."/>
            <person name="Sen G.C."/>
        </authorList>
    </citation>
    <scope>FUNCTION (ISOFORM TESTIS-SPECIFIC)</scope>
    <scope>DISRUPTION PHENOTYPE</scope>
</reference>
<reference key="11">
    <citation type="journal article" date="1998" name="Proc. Natl. Acad. Sci. U.S.A.">
        <title>Angiotensin-converting enzyme and male fertility.</title>
        <authorList>
            <person name="Hagaman J.R."/>
            <person name="Moyer J.S."/>
            <person name="Bachman E.S."/>
            <person name="Sibony M."/>
            <person name="Magyar P.L."/>
            <person name="Welch J.E."/>
            <person name="Smithies O."/>
            <person name="Krege J.H."/>
            <person name="O'Brien D.A."/>
        </authorList>
    </citation>
    <scope>FUNCTION (ISOFORM TESTIS-SPECIFIC)</scope>
    <scope>DISRUPTION PHENOTYPE</scope>
</reference>
<reference key="12">
    <citation type="journal article" date="2000" name="J. Biol. Chem.">
        <title>Physiological non-equivalence of the two isoforms of angiotensin-converting enzyme.</title>
        <authorList>
            <person name="Kessler S.P."/>
            <person name="Rowe T.M."/>
            <person name="Gomos J.B."/>
            <person name="Kessler P.M."/>
            <person name="Sen G.C."/>
        </authorList>
    </citation>
    <scope>FUNCTION (ISOFORM TESTIS-SPECIFIC)</scope>
    <scope>DISRUPTION PHENOTYPE</scope>
</reference>
<reference key="13">
    <citation type="journal article" date="2001" name="J. Pharmacol. Exp. Ther.">
        <title>RXP 407, a selective inhibitor of the N-domain of angiotensin I-converting enzyme, blocks in vivo the degradation of hemoregulatory peptide acetyl-Ser-Asp-Lys-Pro with no effect on angiotensin I hydrolysis.</title>
        <authorList>
            <person name="Junot C."/>
            <person name="Gonzales M.F."/>
            <person name="Ezan E."/>
            <person name="Cotton J."/>
            <person name="Vazeux G."/>
            <person name="Michaud A."/>
            <person name="Azizi M."/>
            <person name="Vassiliou S."/>
            <person name="Yiotakis A."/>
            <person name="Corvol P."/>
            <person name="Dive V."/>
        </authorList>
    </citation>
    <scope>FUNCTION</scope>
    <scope>CATALYTIC ACTIVITY</scope>
    <scope>ACTIVITY REGULATION</scope>
</reference>
<reference key="14">
    <citation type="journal article" date="2002" name="J. Biol. Chem.">
        <title>The germinal isozyme of angiotensin-converting enzyme can substitute for the somatic isozyme in maintaining normal renal structure and functions.</title>
        <authorList>
            <person name="Kessler S.P."/>
            <person name="Gomos J.B."/>
            <person name="Scheidemantel T.S."/>
            <person name="Rowe T.M."/>
            <person name="Smith H.L."/>
            <person name="Sen G.C."/>
        </authorList>
    </citation>
    <scope>FUNCTION (ISOFORM TESTIS-SPECIFIC)</scope>
    <scope>DISRUPTION PHENOTYPE</scope>
</reference>
<reference key="15">
    <citation type="journal article" date="2003" name="J. Biol. Chem.">
        <title>Maintenance of normal blood pressure and renal functions are independent effects of angiotensin-converting enzyme.</title>
        <authorList>
            <person name="Kessler S.P."/>
            <person name="deS Senanayake P."/>
            <person name="Scheidemantel T.S."/>
            <person name="Gomos J.B."/>
            <person name="Rowe T.M."/>
            <person name="Sen G.C."/>
        </authorList>
    </citation>
    <scope>FUNCTION (ISOFORM TESTIS-SPECIFIC)</scope>
    <scope>DISRUPTION PHENOTYPE</scope>
</reference>
<reference key="16">
    <citation type="journal article" date="2004" name="J. Biol. Chem.">
        <title>Role of the N-terminal catalytic domain of angiotensin-converting enzyme investigated by targeted inactivation in mice.</title>
        <authorList>
            <person name="Fuchs S."/>
            <person name="Xiao H.D."/>
            <person name="Cole J.M."/>
            <person name="Adams J.W."/>
            <person name="Frenzel K."/>
            <person name="Michaud A."/>
            <person name="Zhao H."/>
            <person name="Keshelava G."/>
            <person name="Capecchi M.R."/>
            <person name="Corvol P."/>
            <person name="Bernstein K.E."/>
        </authorList>
    </citation>
    <scope>FUNCTION</scope>
    <scope>MUTAGENESIS OF 395-HIS--HIS-399</scope>
</reference>
<reference key="17">
    <citation type="journal article" date="2005" name="J. Biol. Chem.">
        <title>Amyloid beta-protein is degraded by cellular angiotensin-converting enzyme (ACE) and elevated by an ACE inhibitor.</title>
        <authorList>
            <person name="Hemming M.L."/>
            <person name="Selkoe D.J."/>
        </authorList>
    </citation>
    <scope>TISSUE SPECIFICITY</scope>
</reference>
<reference key="18">
    <citation type="journal article" date="2005" name="Nat. Med.">
        <title>Angiotensin-converting enzyme is a GPI-anchored protein releasing factor crucial for fertilization.</title>
        <authorList>
            <person name="Kondoh G."/>
            <person name="Tojo H."/>
            <person name="Nakatani Y."/>
            <person name="Komazawa N."/>
            <person name="Murata C."/>
            <person name="Yamagata K."/>
            <person name="Maeda Y."/>
            <person name="Kinoshita T."/>
            <person name="Okabe M."/>
            <person name="Taguchi R."/>
            <person name="Takeda J."/>
        </authorList>
    </citation>
    <scope>FUNCTION (ISOFORM TESTIS-SPECIFIC)</scope>
    <scope>ACTIVITY REGULATION (ISOFORM TESTIS-SPECIFIC)</scope>
    <scope>ACTIVE SITE</scope>
    <scope>MUTAGENESIS OF HIS-993; GLU-994 AND HIS-997</scope>
</reference>
<reference key="19">
    <citation type="journal article" date="2005" name="Nat. Med.">
        <title>Male fertility is dependent on dipeptidase activity of testis ACE.</title>
        <authorList>
            <person name="Fuchs S."/>
            <person name="Frenzel K."/>
            <person name="Hubert C."/>
            <person name="Lyng R."/>
            <person name="Muller L."/>
            <person name="Michaud A."/>
            <person name="Xiao H.D."/>
            <person name="Adams J.W."/>
            <person name="Capecchi M.R."/>
            <person name="Corvol P."/>
            <person name="Shur B.D."/>
            <person name="Bernstein K.E."/>
        </authorList>
    </citation>
    <scope>FUNCTION (ISOFORM TESTIS-SPECIFIC)</scope>
    <scope>DISRUPTION PHENOTYPE</scope>
    <scope>MUTAGENESIS OF 413-LYS--LYS-417 (ISOFORM TESTIS-SPECIFIC)</scope>
</reference>
<reference key="20">
    <citation type="journal article" date="2006" name="J. Proteome Res.">
        <title>Proteome-wide characterization of N-glycosylation events by diagonal chromatography.</title>
        <authorList>
            <person name="Ghesquiere B."/>
            <person name="Van Damme J."/>
            <person name="Martens L."/>
            <person name="Vandekerckhove J."/>
            <person name="Gevaert K."/>
        </authorList>
    </citation>
    <scope>GLYCOSYLATION [LARGE SCALE ANALYSIS] AT ASN-151</scope>
    <source>
        <strain>C57BL/6J</strain>
        <tissue>Plasma</tissue>
    </source>
</reference>
<reference key="21">
    <citation type="journal article" date="2007" name="Biol. Reprod.">
        <title>Dipeptidase-inactivated tACE action in vivo: selective inhibition of sperm-zona pellucida binding in the mouse.</title>
        <authorList>
            <person name="Deguchi E."/>
            <person name="Tani T."/>
            <person name="Watanabe H."/>
            <person name="Yamada S."/>
            <person name="Kondoh G."/>
        </authorList>
    </citation>
    <scope>MUTAGENESIS OF 413-LYS--LYS-417 (ISOFORM TESTIS-SPECIFIC)</scope>
</reference>
<reference key="22">
    <citation type="journal article" date="2007" name="FASEB J.">
        <title>Vascular expression of germinal ACE fails to maintain normal blood pressure in ACE-/- mice.</title>
        <authorList>
            <person name="Kessler S.P."/>
            <person name="Senanayake P.D."/>
            <person name="Gaughan C."/>
            <person name="Sen G.C."/>
        </authorList>
    </citation>
    <scope>FUNCTION (ISOFORM TESTIS-SPECIFIC)</scope>
</reference>
<reference key="23">
    <citation type="journal article" date="2007" name="Mol. Cell. Proteomics">
        <title>Qualitative and quantitative analyses of protein phosphorylation in naive and stimulated mouse synaptosomal preparations.</title>
        <authorList>
            <person name="Munton R.P."/>
            <person name="Tweedie-Cullen R."/>
            <person name="Livingstone-Zatchej M."/>
            <person name="Weinandy F."/>
            <person name="Waidelich M."/>
            <person name="Longo D."/>
            <person name="Gehrig P."/>
            <person name="Potthast F."/>
            <person name="Rutishauser D."/>
            <person name="Gerrits B."/>
            <person name="Panse C."/>
            <person name="Schlapbach R."/>
            <person name="Mansuy I.M."/>
        </authorList>
    </citation>
    <scope>IDENTIFICATION BY MASS SPECTROMETRY [LARGE SCALE ANALYSIS]</scope>
    <source>
        <tissue>Brain cortex</tissue>
    </source>
</reference>
<reference key="24">
    <citation type="journal article" date="2008" name="Proc. Natl. Acad. Sci. U.S.A.">
        <title>Mice lacking angiotensin-converting enzyme have increased energy expenditure, with reduced fat mass and improved glucose clearance.</title>
        <authorList>
            <person name="Jayasooriya A.P."/>
            <person name="Mathai M.L."/>
            <person name="Walker L.L."/>
            <person name="Begg D.P."/>
            <person name="Denton D.A."/>
            <person name="Cameron-Smith D."/>
            <person name="Egan G.F."/>
            <person name="McKinley M.J."/>
            <person name="Rodger P.D."/>
            <person name="Sinclair A.J."/>
            <person name="Wark J.D."/>
            <person name="Weisinger H.S."/>
            <person name="Jois M."/>
            <person name="Weisinger R.S."/>
        </authorList>
    </citation>
    <scope>DISRUPTION PHENOTYPE</scope>
</reference>
<reference key="25">
    <citation type="journal article" date="2010" name="Cell">
        <title>A tissue-specific atlas of mouse protein phosphorylation and expression.</title>
        <authorList>
            <person name="Huttlin E.L."/>
            <person name="Jedrychowski M.P."/>
            <person name="Elias J.E."/>
            <person name="Goswami T."/>
            <person name="Rad R."/>
            <person name="Beausoleil S.A."/>
            <person name="Villen J."/>
            <person name="Haas W."/>
            <person name="Sowa M.E."/>
            <person name="Gygi S.P."/>
        </authorList>
    </citation>
    <scope>PHOSPHORYLATION [LARGE SCALE ANALYSIS] AT SER-1305</scope>
    <scope>IDENTIFICATION BY MASS SPECTROMETRY [LARGE SCALE ANALYSIS]</scope>
    <source>
        <tissue>Brain</tissue>
        <tissue>Brown adipose tissue</tissue>
        <tissue>Heart</tissue>
        <tissue>Kidney</tissue>
        <tissue>Liver</tissue>
        <tissue>Lung</tissue>
        <tissue>Pancreas</tissue>
        <tissue>Spleen</tissue>
        <tissue>Testis</tissue>
    </source>
</reference>
<reference key="26">
    <citation type="journal article" date="2013" name="Am. J. Physiol.">
        <title>Angiotensin II regulates ACE and ACE2 in neurons through p38 mitogen-activated protein kinase and extracellular signal-regulated kinase 1/2 signaling.</title>
        <authorList>
            <person name="Xiao L."/>
            <person name="Haack K.K."/>
            <person name="Zucker I.H."/>
        </authorList>
    </citation>
    <scope>SUBCELLULAR LOCATION</scope>
</reference>
<reference key="27">
    <citation type="journal article" date="2022" name="Science">
        <title>Angiotensin-converting enzyme gates brain circuit-specific plasticity via an endogenous opioid.</title>
        <authorList>
            <person name="Trieu B.H."/>
            <person name="Remmers B.C."/>
            <person name="Toddes C."/>
            <person name="Brandner D.D."/>
            <person name="Lefevre E.M."/>
            <person name="Kocharian A."/>
            <person name="Retzlaff C.L."/>
            <person name="Dick R.M."/>
            <person name="Mashal M.A."/>
            <person name="Gauthier E.A."/>
            <person name="Xie W."/>
            <person name="Zhang Y."/>
            <person name="More S.S."/>
            <person name="Rothwell P.E."/>
        </authorList>
    </citation>
    <scope>FUNCTION</scope>
    <scope>CATALYTIC ACTIVITY</scope>
    <scope>ACTIVITY REGULATION</scope>
    <scope>TISSUE SPECIFICITY</scope>
</reference>
<evidence type="ECO:0000250" key="1">
    <source>
        <dbReference type="UniProtKB" id="P12821"/>
    </source>
</evidence>
<evidence type="ECO:0000250" key="2">
    <source>
        <dbReference type="UniProtKB" id="P12822"/>
    </source>
</evidence>
<evidence type="ECO:0000255" key="3"/>
<evidence type="ECO:0000255" key="4">
    <source>
        <dbReference type="PROSITE-ProRule" id="PRU01355"/>
    </source>
</evidence>
<evidence type="ECO:0000269" key="5">
    <source>
    </source>
</evidence>
<evidence type="ECO:0000269" key="6">
    <source>
    </source>
</evidence>
<evidence type="ECO:0000269" key="7">
    <source>
    </source>
</evidence>
<evidence type="ECO:0000269" key="8">
    <source>
    </source>
</evidence>
<evidence type="ECO:0000269" key="9">
    <source>
    </source>
</evidence>
<evidence type="ECO:0000269" key="10">
    <source>
    </source>
</evidence>
<evidence type="ECO:0000269" key="11">
    <source>
    </source>
</evidence>
<evidence type="ECO:0000269" key="12">
    <source>
    </source>
</evidence>
<evidence type="ECO:0000269" key="13">
    <source>
    </source>
</evidence>
<evidence type="ECO:0000269" key="14">
    <source>
    </source>
</evidence>
<evidence type="ECO:0000269" key="15">
    <source>
    </source>
</evidence>
<evidence type="ECO:0000269" key="16">
    <source>
    </source>
</evidence>
<evidence type="ECO:0000269" key="17">
    <source>
    </source>
</evidence>
<evidence type="ECO:0000269" key="18">
    <source>
    </source>
</evidence>
<evidence type="ECO:0000269" key="19">
    <source>
    </source>
</evidence>
<evidence type="ECO:0000269" key="20">
    <source>
    </source>
</evidence>
<evidence type="ECO:0000269" key="21">
    <source>
    </source>
</evidence>
<evidence type="ECO:0000269" key="22">
    <source>
    </source>
</evidence>
<evidence type="ECO:0000269" key="23">
    <source>
    </source>
</evidence>
<evidence type="ECO:0000269" key="24">
    <source>
    </source>
</evidence>
<evidence type="ECO:0000303" key="25">
    <source>
    </source>
</evidence>
<evidence type="ECO:0000303" key="26">
    <source>
    </source>
</evidence>
<evidence type="ECO:0000303" key="27">
    <source>
    </source>
</evidence>
<evidence type="ECO:0000303" key="28">
    <source>
    </source>
</evidence>
<evidence type="ECO:0000305" key="29"/>
<evidence type="ECO:0000305" key="30">
    <source>
    </source>
</evidence>
<evidence type="ECO:0000312" key="31">
    <source>
        <dbReference type="MGI" id="MGI:87874"/>
    </source>
</evidence>
<evidence type="ECO:0007744" key="32">
    <source>
    </source>
</evidence>
<accession>P09470</accession>
<accession>P22967</accession>
<accession>Q6GTS2</accession>